<name>IKBL1_MOUSE</name>
<organism>
    <name type="scientific">Mus musculus</name>
    <name type="common">Mouse</name>
    <dbReference type="NCBI Taxonomy" id="10090"/>
    <lineage>
        <taxon>Eukaryota</taxon>
        <taxon>Metazoa</taxon>
        <taxon>Chordata</taxon>
        <taxon>Craniata</taxon>
        <taxon>Vertebrata</taxon>
        <taxon>Euteleostomi</taxon>
        <taxon>Mammalia</taxon>
        <taxon>Eutheria</taxon>
        <taxon>Euarchontoglires</taxon>
        <taxon>Glires</taxon>
        <taxon>Rodentia</taxon>
        <taxon>Myomorpha</taxon>
        <taxon>Muroidea</taxon>
        <taxon>Muridae</taxon>
        <taxon>Murinae</taxon>
        <taxon>Mus</taxon>
        <taxon>Mus</taxon>
    </lineage>
</organism>
<sequence length="381" mass="43202">MSNPSPQAPEEEASTSVCRPQSCSMASASRRHRRERRFRRYLSAGRLVRAQALLQRHPGLDVDAGQPPPLHRACARHDAPALCLLLRLGADPAHQDRHGDTALHAAARQGPDAYTDFFLPLLSRCPSAMGIKNKDGETPGQILGWGPPWDSAEEEEDEEVSKEREWRQKLQGELEDEWQEVIGRFEDDASRDTQEPESFSAWSERLAREHAQKQRQQLEAEGSCRPPRAEGSSHSWRQHEEEQRLFRERARAKEKELCESRARRAQEAQRDKGPEPPRAGPRAEHPRGAERGSLWRFGDVPWPCPGGGDPEAMAAALVARGPPLEEQGALKRYLRVQQVRWHPDRFLQRFRSQIETWELGRVMGAVTALSQALNRHAEALK</sequence>
<keyword id="KW-0040">ANK repeat</keyword>
<keyword id="KW-0539">Nucleus</keyword>
<keyword id="KW-0597">Phosphoprotein</keyword>
<keyword id="KW-1185">Reference proteome</keyword>
<keyword id="KW-0677">Repeat</keyword>
<evidence type="ECO:0000250" key="1"/>
<evidence type="ECO:0000250" key="2">
    <source>
        <dbReference type="UniProtKB" id="Q9UBC1"/>
    </source>
</evidence>
<evidence type="ECO:0000256" key="3">
    <source>
        <dbReference type="SAM" id="MobiDB-lite"/>
    </source>
</evidence>
<evidence type="ECO:0000305" key="4"/>
<dbReference type="EMBL" id="AF095902">
    <property type="protein sequence ID" value="AAC64292.1"/>
    <property type="molecule type" value="mRNA"/>
</dbReference>
<dbReference type="EMBL" id="AC007080">
    <property type="protein sequence ID" value="AAD30175.1"/>
    <property type="molecule type" value="Genomic_DNA"/>
</dbReference>
<dbReference type="EMBL" id="AF109719">
    <property type="protein sequence ID" value="AAC82486.1"/>
    <property type="molecule type" value="Genomic_DNA"/>
</dbReference>
<dbReference type="EMBL" id="BC013269">
    <property type="protein sequence ID" value="AAH13269.1"/>
    <property type="molecule type" value="mRNA"/>
</dbReference>
<dbReference type="CCDS" id="CCDS28693.1"/>
<dbReference type="RefSeq" id="NP_035039.1">
    <property type="nucleotide sequence ID" value="NM_010909.5"/>
</dbReference>
<dbReference type="SMR" id="O88995"/>
<dbReference type="BioGRID" id="201756">
    <property type="interactions" value="1"/>
</dbReference>
<dbReference type="FunCoup" id="O88995">
    <property type="interactions" value="1983"/>
</dbReference>
<dbReference type="STRING" id="10090.ENSMUSP00000035452"/>
<dbReference type="PhosphoSitePlus" id="O88995"/>
<dbReference type="PaxDb" id="10090-ENSMUSP00000035452"/>
<dbReference type="ProteomicsDB" id="269548"/>
<dbReference type="Antibodypedia" id="27150">
    <property type="antibodies" value="181 antibodies from 23 providers"/>
</dbReference>
<dbReference type="DNASU" id="18038"/>
<dbReference type="Ensembl" id="ENSMUST00000048994.7">
    <property type="protein sequence ID" value="ENSMUSP00000035452.7"/>
    <property type="gene ID" value="ENSMUSG00000042419.9"/>
</dbReference>
<dbReference type="GeneID" id="18038"/>
<dbReference type="KEGG" id="mmu:18038"/>
<dbReference type="UCSC" id="uc008cgv.1">
    <property type="organism name" value="mouse"/>
</dbReference>
<dbReference type="AGR" id="MGI:1340031"/>
<dbReference type="CTD" id="4795"/>
<dbReference type="MGI" id="MGI:1340031">
    <property type="gene designation" value="Nfkbil1"/>
</dbReference>
<dbReference type="VEuPathDB" id="HostDB:ENSMUSG00000042419"/>
<dbReference type="eggNOG" id="ENOG502QTMZ">
    <property type="taxonomic scope" value="Eukaryota"/>
</dbReference>
<dbReference type="GeneTree" id="ENSGT00390000013929"/>
<dbReference type="HOGENOM" id="CLU_054217_0_0_1"/>
<dbReference type="InParanoid" id="O88995"/>
<dbReference type="OMA" id="QEAQGDQ"/>
<dbReference type="OrthoDB" id="412109at2759"/>
<dbReference type="PhylomeDB" id="O88995"/>
<dbReference type="TreeFam" id="TF333242"/>
<dbReference type="BioGRID-ORCS" id="18038">
    <property type="hits" value="5 hits in 77 CRISPR screens"/>
</dbReference>
<dbReference type="ChiTaRS" id="Nfkbil1">
    <property type="organism name" value="mouse"/>
</dbReference>
<dbReference type="PRO" id="PR:O88995"/>
<dbReference type="Proteomes" id="UP000000589">
    <property type="component" value="Chromosome 17"/>
</dbReference>
<dbReference type="RNAct" id="O88995">
    <property type="molecule type" value="protein"/>
</dbReference>
<dbReference type="Bgee" id="ENSMUSG00000042419">
    <property type="expression patterns" value="Expressed in granulocyte and 191 other cell types or tissues"/>
</dbReference>
<dbReference type="GO" id="GO:0005654">
    <property type="term" value="C:nucleoplasm"/>
    <property type="evidence" value="ECO:0007669"/>
    <property type="project" value="Ensembl"/>
</dbReference>
<dbReference type="GO" id="GO:0005634">
    <property type="term" value="C:nucleus"/>
    <property type="evidence" value="ECO:0000314"/>
    <property type="project" value="MGI"/>
</dbReference>
<dbReference type="GO" id="GO:0140416">
    <property type="term" value="F:transcription regulator inhibitor activity"/>
    <property type="evidence" value="ECO:0000314"/>
    <property type="project" value="MGI"/>
</dbReference>
<dbReference type="GO" id="GO:0071222">
    <property type="term" value="P:cellular response to lipopolysaccharide"/>
    <property type="evidence" value="ECO:0000250"/>
    <property type="project" value="UniProtKB"/>
</dbReference>
<dbReference type="GO" id="GO:0043124">
    <property type="term" value="P:negative regulation of canonical NF-kappaB signal transduction"/>
    <property type="evidence" value="ECO:0000314"/>
    <property type="project" value="MGI"/>
</dbReference>
<dbReference type="GO" id="GO:0031665">
    <property type="term" value="P:negative regulation of lipopolysaccharide-mediated signaling pathway"/>
    <property type="evidence" value="ECO:0000250"/>
    <property type="project" value="UniProtKB"/>
</dbReference>
<dbReference type="GO" id="GO:0032088">
    <property type="term" value="P:negative regulation of NF-kappaB transcription factor activity"/>
    <property type="evidence" value="ECO:0000250"/>
    <property type="project" value="UniProtKB"/>
</dbReference>
<dbReference type="GO" id="GO:0034122">
    <property type="term" value="P:negative regulation of toll-like receptor signaling pathway"/>
    <property type="evidence" value="ECO:0000250"/>
    <property type="project" value="UniProtKB"/>
</dbReference>
<dbReference type="GO" id="GO:0032720">
    <property type="term" value="P:negative regulation of tumor necrosis factor production"/>
    <property type="evidence" value="ECO:0000250"/>
    <property type="project" value="UniProtKB"/>
</dbReference>
<dbReference type="FunFam" id="1.25.40.20:FF:000145">
    <property type="entry name" value="NF-kappa-B inhibitor-like protein 1 isoform X1"/>
    <property type="match status" value="1"/>
</dbReference>
<dbReference type="Gene3D" id="1.25.40.20">
    <property type="entry name" value="Ankyrin repeat-containing domain"/>
    <property type="match status" value="1"/>
</dbReference>
<dbReference type="InterPro" id="IPR036770">
    <property type="entry name" value="Ankyrin_rpt-contain_sf"/>
</dbReference>
<dbReference type="InterPro" id="IPR038753">
    <property type="entry name" value="NFKBIL1"/>
</dbReference>
<dbReference type="PANTHER" id="PTHR15263">
    <property type="entry name" value="I-KAPPA-B-LIKE PROTEIN IKBL"/>
    <property type="match status" value="1"/>
</dbReference>
<dbReference type="PANTHER" id="PTHR15263:SF1">
    <property type="entry name" value="NF-KAPPA-B INHIBITOR-LIKE PROTEIN 1"/>
    <property type="match status" value="1"/>
</dbReference>
<dbReference type="SUPFAM" id="SSF48403">
    <property type="entry name" value="Ankyrin repeat"/>
    <property type="match status" value="1"/>
</dbReference>
<dbReference type="PROSITE" id="PS50297">
    <property type="entry name" value="ANK_REP_REGION"/>
    <property type="match status" value="1"/>
</dbReference>
<comment type="function">
    <text evidence="1">Involved in the regulation of innate immune response. Acts as negative regulator of Toll-like receptor and interferon-regulatory factor (IRF) signaling pathways. Contributes to the negative regulation of transcriptional activation of NF-kappa-B target genes in response to endogenous pro-inflammatory stimuli (By similarity).</text>
</comment>
<comment type="subunit">
    <text evidence="1">Interacts with CACTIN (via N-terminal domain); the interaction occurs in a pro-inflammatory-independent manner.</text>
</comment>
<comment type="subcellular location">
    <subcellularLocation>
        <location evidence="1">Nucleus</location>
    </subcellularLocation>
    <text evidence="1">Nuclear localization with a speckled expression pattern in some cells. Colocalizes with CACTIN in the nucleus (By similarity).</text>
</comment>
<comment type="tissue specificity">
    <text>High expression found in heart muscle, liver, kidney and skin. Not detected in spleen, lung and brain.</text>
</comment>
<gene>
    <name type="primary">Nfkbil1</name>
    <name type="synonym">Ikbl</name>
</gene>
<feature type="chain" id="PRO_0000067011" description="NF-kappa-B inhibitor-like protein 1">
    <location>
        <begin position="1"/>
        <end position="381"/>
    </location>
</feature>
<feature type="repeat" description="ANK 1">
    <location>
        <begin position="64"/>
        <end position="93"/>
    </location>
</feature>
<feature type="repeat" description="ANK 2">
    <location>
        <begin position="97"/>
        <end position="134"/>
    </location>
</feature>
<feature type="region of interest" description="Disordered" evidence="3">
    <location>
        <begin position="1"/>
        <end position="34"/>
    </location>
</feature>
<feature type="region of interest" description="Disordered" evidence="3">
    <location>
        <begin position="132"/>
        <end position="167"/>
    </location>
</feature>
<feature type="region of interest" description="Disordered" evidence="3">
    <location>
        <begin position="186"/>
        <end position="298"/>
    </location>
</feature>
<feature type="compositionally biased region" description="Polar residues" evidence="3">
    <location>
        <begin position="14"/>
        <end position="27"/>
    </location>
</feature>
<feature type="compositionally biased region" description="Acidic residues" evidence="3">
    <location>
        <begin position="151"/>
        <end position="160"/>
    </location>
</feature>
<feature type="compositionally biased region" description="Basic and acidic residues" evidence="3">
    <location>
        <begin position="205"/>
        <end position="218"/>
    </location>
</feature>
<feature type="compositionally biased region" description="Basic and acidic residues" evidence="3">
    <location>
        <begin position="237"/>
        <end position="290"/>
    </location>
</feature>
<feature type="modified residue" description="Phosphoserine" evidence="2">
    <location>
        <position position="151"/>
    </location>
</feature>
<feature type="sequence conflict" description="In Ref. 3; AAH13269." evidence="4" ref="3">
    <original>E</original>
    <variation>Q</variation>
    <location>
        <position position="219"/>
    </location>
</feature>
<protein>
    <recommendedName>
        <fullName>NF-kappa-B inhibitor-like protein 1</fullName>
    </recommendedName>
    <alternativeName>
        <fullName>Inhibitor of kappa B-like protein</fullName>
        <shortName>I-kappa-B-like protein</shortName>
        <shortName>IkappaBL</shortName>
    </alternativeName>
    <alternativeName>
        <fullName>Nuclear factor of kappa light polypeptide gene enhancer in B-cells inhibitor-like 1</fullName>
    </alternativeName>
</protein>
<accession>O88995</accession>
<accession>Q91X16</accession>
<accession>Q9R1Y3</accession>
<proteinExistence type="evidence at transcript level"/>
<reference key="1">
    <citation type="journal article" date="1999" name="Biochim. Biophys. Acta">
        <title>Sequence analysis and expression of a mouse homolog of human IkappaBL gene.</title>
        <authorList>
            <person name="Handel-Fernandez M.E."/>
            <person name="Vincek V."/>
        </authorList>
    </citation>
    <scope>NUCLEOTIDE SEQUENCE [MRNA]</scope>
    <source>
        <strain>BALB/cJ</strain>
        <tissue>Muscle</tissue>
        <tissue>Skin</tissue>
    </source>
</reference>
<reference key="2">
    <citation type="journal article" date="2003" name="Genome Res.">
        <title>Analysis of the gene-dense major histocompatibility complex class III region and its comparison to mouse.</title>
        <authorList>
            <person name="Xie T."/>
            <person name="Rowen L."/>
            <person name="Aguado B."/>
            <person name="Ahearn M.E."/>
            <person name="Madan A."/>
            <person name="Qin S."/>
            <person name="Campbell R.D."/>
            <person name="Hood L."/>
        </authorList>
    </citation>
    <scope>NUCLEOTIDE SEQUENCE [LARGE SCALE GENOMIC DNA]</scope>
    <source>
        <strain>129</strain>
    </source>
</reference>
<reference key="3">
    <citation type="journal article" date="2004" name="Genome Res.">
        <title>The status, quality, and expansion of the NIH full-length cDNA project: the Mammalian Gene Collection (MGC).</title>
        <authorList>
            <consortium name="The MGC Project Team"/>
        </authorList>
    </citation>
    <scope>NUCLEOTIDE SEQUENCE [LARGE SCALE MRNA]</scope>
    <source>
        <tissue>Salivary gland</tissue>
    </source>
</reference>